<keyword id="KW-0158">Chromosome</keyword>
<keyword id="KW-0217">Developmental protein</keyword>
<keyword id="KW-0221">Differentiation</keyword>
<keyword id="KW-0903">Direct protein sequencing</keyword>
<keyword id="KW-0226">DNA condensation</keyword>
<keyword id="KW-0238">DNA-binding</keyword>
<keyword id="KW-0544">Nucleosome core</keyword>
<keyword id="KW-0539">Nucleus</keyword>
<keyword id="KW-1185">Reference proteome</keyword>
<keyword id="KW-0744">Spermatogenesis</keyword>
<reference key="1">
    <citation type="journal article" date="1996" name="J. Biol. Chem.">
        <title>Protamines of reptiles.</title>
        <authorList>
            <person name="Hunt J.G."/>
            <person name="Kasinsky H.E."/>
            <person name="Elsey R.M."/>
            <person name="Wright C.L."/>
            <person name="Rice P."/>
            <person name="Bell J.E."/>
            <person name="Sharp D.J."/>
            <person name="Kiss A.J."/>
            <person name="Hunt D.F."/>
            <person name="Arnott D.P."/>
            <person name="Russ M.M."/>
            <person name="Shabanowitz J."/>
            <person name="Ausio J."/>
        </authorList>
    </citation>
    <scope>PROTEIN SEQUENCE OF 2-59</scope>
    <source>
        <tissue>Sperm</tissue>
    </source>
</reference>
<organism>
    <name type="scientific">Chrysemys picta bellii</name>
    <name type="common">Western painted turtle</name>
    <name type="synonym">Emys bellii</name>
    <dbReference type="NCBI Taxonomy" id="8478"/>
    <lineage>
        <taxon>Eukaryota</taxon>
        <taxon>Metazoa</taxon>
        <taxon>Chordata</taxon>
        <taxon>Craniata</taxon>
        <taxon>Vertebrata</taxon>
        <taxon>Euteleostomi</taxon>
        <taxon>Archelosauria</taxon>
        <taxon>Testudinata</taxon>
        <taxon>Testudines</taxon>
        <taxon>Cryptodira</taxon>
        <taxon>Durocryptodira</taxon>
        <taxon>Testudinoidea</taxon>
        <taxon>Emydidae</taxon>
        <taxon>Chrysemys</taxon>
    </lineage>
</organism>
<evidence type="ECO:0000250" key="1"/>
<evidence type="ECO:0000256" key="2">
    <source>
        <dbReference type="SAM" id="MobiDB-lite"/>
    </source>
</evidence>
<evidence type="ECO:0000269" key="3">
    <source>
    </source>
</evidence>
<evidence type="ECO:0000305" key="4"/>
<comment type="function">
    <text evidence="1">Protamines substitute for histones in the chromatin of sperm during the haploid phase of spermatogenesis. They compact sperm DNA into a highly condensed, stable and inactive complex (By similarity).</text>
</comment>
<comment type="subcellular location">
    <subcellularLocation>
        <location evidence="1">Nucleus</location>
    </subcellularLocation>
    <subcellularLocation>
        <location evidence="1">Chromosome</location>
    </subcellularLocation>
</comment>
<comment type="tissue specificity">
    <text>Testis.</text>
</comment>
<comment type="similarity">
    <text evidence="4">Belongs to the protamine P1 family.</text>
</comment>
<accession>Q7LZB2</accession>
<dbReference type="PIR" id="A58208">
    <property type="entry name" value="A58208"/>
</dbReference>
<dbReference type="Proteomes" id="UP000694380">
    <property type="component" value="Unplaced"/>
</dbReference>
<dbReference type="GO" id="GO:0000786">
    <property type="term" value="C:nucleosome"/>
    <property type="evidence" value="ECO:0007669"/>
    <property type="project" value="UniProtKB-KW"/>
</dbReference>
<dbReference type="GO" id="GO:0005634">
    <property type="term" value="C:nucleus"/>
    <property type="evidence" value="ECO:0007669"/>
    <property type="project" value="UniProtKB-SubCell"/>
</dbReference>
<dbReference type="GO" id="GO:0003677">
    <property type="term" value="F:DNA binding"/>
    <property type="evidence" value="ECO:0007669"/>
    <property type="project" value="UniProtKB-KW"/>
</dbReference>
<dbReference type="GO" id="GO:0030261">
    <property type="term" value="P:chromosome condensation"/>
    <property type="evidence" value="ECO:0007669"/>
    <property type="project" value="UniProtKB-KW"/>
</dbReference>
<dbReference type="GO" id="GO:0035092">
    <property type="term" value="P:sperm DNA condensation"/>
    <property type="evidence" value="ECO:0007669"/>
    <property type="project" value="InterPro"/>
</dbReference>
<dbReference type="InterPro" id="IPR000221">
    <property type="entry name" value="Protamine_P1"/>
</dbReference>
<dbReference type="PROSITE" id="PS00048">
    <property type="entry name" value="PROTAMINE_P1"/>
    <property type="match status" value="1"/>
</dbReference>
<protein>
    <recommendedName>
        <fullName>Sperm protamine P1-type</fullName>
    </recommendedName>
    <alternativeName>
        <fullName>Protamine I-1</fullName>
    </alternativeName>
</protein>
<proteinExistence type="evidence at protein level"/>
<feature type="initiator methionine" description="Removed" evidence="3">
    <location>
        <position position="1"/>
    </location>
</feature>
<feature type="chain" id="PRO_0000191592" description="Sperm protamine P1-type">
    <location>
        <begin position="2"/>
        <end position="59"/>
    </location>
</feature>
<feature type="region of interest" description="Disordered" evidence="2">
    <location>
        <begin position="1"/>
        <end position="59"/>
    </location>
</feature>
<name>HSP1_CHRPI</name>
<sequence>MARYRRNRSRSRSRRRRRRRGGRGGRRGRRRRRHGQRRRGRRGRERTRRRRRRRRRSSS</sequence>